<proteinExistence type="evidence at protein level"/>
<gene>
    <name type="primary">wapA</name>
    <name type="ordered locus">GYO_4330</name>
</gene>
<name>WAPA_BACS4</name>
<comment type="function">
    <text evidence="4">Toxic component of a toxin-immunity protein module, which functions as a cellular contact-dependent growth inhibition (CDI) system. A site-specific tRNA3(Ser) nuclease, the C-terminus (residues 2201-2335) probably removes 2 or 4 nucleotides from the 3' end of tRNA3(Ser) but not tRNA2(Arg) or tRNA(Glu) (upon expression in E.coli), possibly endonucleolytically. The nuclease activity is neutralized by expression of the cognate immunity protein WapI from the same strain, but not its homolog from 2 other B.subtilis strains. The C-terminus cannot be expressed on its own in E.coli, however it can be cloned in the presence of its cognate immunity protein gene wapI. Cell contact is probably necessary for growth inhibition.</text>
</comment>
<comment type="subcellular location">
    <subcellularLocation>
        <location evidence="1">Secreted</location>
        <location evidence="1">Cell wall</location>
    </subcellularLocation>
    <text evidence="1">Released into the medium.</text>
</comment>
<comment type="similarity">
    <text evidence="5">Belongs to the RHS/WapA nuclease family.</text>
</comment>
<reference key="1">
    <citation type="journal article" date="2012" name="J. Bacteriol.">
        <title>Whole-genome sequences of Bacillus subtilis and close relatives.</title>
        <authorList>
            <person name="Earl A.M."/>
            <person name="Eppinger M."/>
            <person name="Fricke W.F."/>
            <person name="Rosovitz M.J."/>
            <person name="Rasko D.A."/>
            <person name="Daugherty S."/>
            <person name="Losick R."/>
            <person name="Kolter R."/>
            <person name="Ravel J."/>
        </authorList>
    </citation>
    <scope>NUCLEOTIDE SEQUENCE [LARGE SCALE GENOMIC DNA]</scope>
    <source>
        <strain>DSM 15029 / JCM 12233 / NBRC 101239 / NRRL B-23049 / TU-B-10</strain>
    </source>
</reference>
<reference key="2">
    <citation type="journal article" date="2013" name="Proc. Natl. Acad. Sci. U.S.A.">
        <title>Rhs proteins from diverse bacteria mediate intercellular competition.</title>
        <authorList>
            <person name="Koskiniemi S."/>
            <person name="Lamoureux J.G."/>
            <person name="Nikolakakis K.C."/>
            <person name="t'Kint de Roodenbeke C."/>
            <person name="Kaplan M.D."/>
            <person name="Low D.A."/>
            <person name="Hayes C.S."/>
        </authorList>
    </citation>
    <scope>FUNCTION AS A TRNA NUCLEASE</scope>
    <scope>FUNCTION AS A TOXIN</scope>
    <scope>EXPRESSION IN E.COLI</scope>
    <source>
        <strain>DSM 15029 / JCM 12233 / NBRC 101239 / NRRL B-23049 / TU-B-10</strain>
    </source>
</reference>
<accession>G4NYJ6</accession>
<protein>
    <recommendedName>
        <fullName>tRNA3(Ser)-specific nuclease WapA</fullName>
        <ecNumber>3.1.-.-</ecNumber>
    </recommendedName>
    <alternativeName>
        <fullName>Cell wall-associated protein</fullName>
    </alternativeName>
    <alternativeName>
        <fullName>RNase WapA</fullName>
    </alternativeName>
    <alternativeName>
        <fullName>Toxin WapA</fullName>
    </alternativeName>
</protein>
<organism>
    <name type="scientific">Bacillus spizizenii (strain DSM 15029 / JCM 12233 / NBRC 101239 / NRRL B-23049 / TU-B-10)</name>
    <name type="common">Bacillus subtilis subsp. spizizenii</name>
    <dbReference type="NCBI Taxonomy" id="1052585"/>
    <lineage>
        <taxon>Bacteria</taxon>
        <taxon>Bacillati</taxon>
        <taxon>Bacillota</taxon>
        <taxon>Bacilli</taxon>
        <taxon>Bacillales</taxon>
        <taxon>Bacillaceae</taxon>
        <taxon>Bacillus</taxon>
    </lineage>
</organism>
<dbReference type="EC" id="3.1.-.-"/>
<dbReference type="EMBL" id="CP002905">
    <property type="protein sequence ID" value="AEP88889.1"/>
    <property type="molecule type" value="Genomic_DNA"/>
</dbReference>
<dbReference type="RefSeq" id="WP_014115727.1">
    <property type="nucleotide sequence ID" value="NC_016047.1"/>
</dbReference>
<dbReference type="SMR" id="G4NYJ6"/>
<dbReference type="STRING" id="1052585.GYO_4330"/>
<dbReference type="GeneID" id="11241531"/>
<dbReference type="KEGG" id="bst:GYO_4330"/>
<dbReference type="HOGENOM" id="CLU_001086_0_0_9"/>
<dbReference type="Proteomes" id="UP000002651">
    <property type="component" value="Chromosome"/>
</dbReference>
<dbReference type="GO" id="GO:0005576">
    <property type="term" value="C:extracellular region"/>
    <property type="evidence" value="ECO:0007669"/>
    <property type="project" value="UniProtKB-KW"/>
</dbReference>
<dbReference type="GO" id="GO:0004519">
    <property type="term" value="F:endonuclease activity"/>
    <property type="evidence" value="ECO:0007669"/>
    <property type="project" value="UniProtKB-KW"/>
</dbReference>
<dbReference type="GO" id="GO:0016798">
    <property type="term" value="F:hydrolase activity, acting on glycosyl bonds"/>
    <property type="evidence" value="ECO:0007669"/>
    <property type="project" value="InterPro"/>
</dbReference>
<dbReference type="GO" id="GO:0090729">
    <property type="term" value="F:toxin activity"/>
    <property type="evidence" value="ECO:0007669"/>
    <property type="project" value="UniProtKB-KW"/>
</dbReference>
<dbReference type="GO" id="GO:0004549">
    <property type="term" value="F:tRNA-specific ribonuclease activity"/>
    <property type="evidence" value="ECO:0000314"/>
    <property type="project" value="UniProtKB"/>
</dbReference>
<dbReference type="FunFam" id="2.180.10.10:FF:000010">
    <property type="entry name" value="Cell wall-associated protein"/>
    <property type="match status" value="1"/>
</dbReference>
<dbReference type="FunFam" id="2.180.10.10:FF:000015">
    <property type="entry name" value="Cell wall-associated protein"/>
    <property type="match status" value="1"/>
</dbReference>
<dbReference type="Gene3D" id="3.90.930.1">
    <property type="match status" value="1"/>
</dbReference>
<dbReference type="Gene3D" id="2.60.120.260">
    <property type="entry name" value="Galactose-binding domain-like"/>
    <property type="match status" value="2"/>
</dbReference>
<dbReference type="Gene3D" id="2.60.40.10">
    <property type="entry name" value="Immunoglobulins"/>
    <property type="match status" value="1"/>
</dbReference>
<dbReference type="Gene3D" id="2.180.10.10">
    <property type="entry name" value="RHS repeat-associated core"/>
    <property type="match status" value="2"/>
</dbReference>
<dbReference type="InterPro" id="IPR055372">
    <property type="entry name" value="CBM96"/>
</dbReference>
<dbReference type="InterPro" id="IPR003305">
    <property type="entry name" value="CenC_carb-bd"/>
</dbReference>
<dbReference type="InterPro" id="IPR045351">
    <property type="entry name" value="DUF6531"/>
</dbReference>
<dbReference type="InterPro" id="IPR008979">
    <property type="entry name" value="Galactose-bd-like_sf"/>
</dbReference>
<dbReference type="InterPro" id="IPR013783">
    <property type="entry name" value="Ig-like_fold"/>
</dbReference>
<dbReference type="InterPro" id="IPR022385">
    <property type="entry name" value="Rhs_assc_core"/>
</dbReference>
<dbReference type="InterPro" id="IPR031325">
    <property type="entry name" value="RHS_repeat"/>
</dbReference>
<dbReference type="InterPro" id="IPR050708">
    <property type="entry name" value="T6SS_VgrG/RHS"/>
</dbReference>
<dbReference type="InterPro" id="IPR006530">
    <property type="entry name" value="YD"/>
</dbReference>
<dbReference type="NCBIfam" id="NF033679">
    <property type="entry name" value="DNRLRE_dom"/>
    <property type="match status" value="1"/>
</dbReference>
<dbReference type="NCBIfam" id="TIGR03696">
    <property type="entry name" value="Rhs_assc_core"/>
    <property type="match status" value="1"/>
</dbReference>
<dbReference type="NCBIfam" id="TIGR01643">
    <property type="entry name" value="YD_repeat_2x"/>
    <property type="match status" value="6"/>
</dbReference>
<dbReference type="PANTHER" id="PTHR32305">
    <property type="match status" value="1"/>
</dbReference>
<dbReference type="PANTHER" id="PTHR32305:SF15">
    <property type="entry name" value="PROTEIN RHSA-RELATED"/>
    <property type="match status" value="1"/>
</dbReference>
<dbReference type="Pfam" id="PF24517">
    <property type="entry name" value="CBM96"/>
    <property type="match status" value="1"/>
</dbReference>
<dbReference type="Pfam" id="PF02018">
    <property type="entry name" value="CBM_4_9"/>
    <property type="match status" value="1"/>
</dbReference>
<dbReference type="Pfam" id="PF20148">
    <property type="entry name" value="DUF6531"/>
    <property type="match status" value="1"/>
</dbReference>
<dbReference type="Pfam" id="PF05593">
    <property type="entry name" value="RHS_repeat"/>
    <property type="match status" value="7"/>
</dbReference>
<dbReference type="SUPFAM" id="SSF49785">
    <property type="entry name" value="Galactose-binding domain-like"/>
    <property type="match status" value="1"/>
</dbReference>
<sequence length="2335" mass="259015">MKKRKRRTFKRFIAAFLVLSLMISLLPADVLAKTTEEEAGNRIVSDDPEETPRNEQTEEAVPFPSKDINKEGEITSERTENTKLYYEGDGVYKQEVYLDPIHTKETPNADWEDISPELKESTSKQVETENAILNSDFQKQMKNGLYATFEHNDHKVTYSLVEAKGPNKTSLTPKDTSADYKTDSNEIVYPDVFPNIDLQTFTFNENIKEDLVLHQYDGYNTFTFQVKTDLQAKEQEDGSIDFSDEKGKVVFSVPKPFMTDSKLDELSGEVERSDKVSYKLEKNEEGYLLHLTADENWLKDPERVYPVSIDPSTSLSVSSDTFVMSAYPTTNYSASSQKWDANLKSYVLKTGYYDKTTGTNYAFMKFNNLKPIQNMAVTKATLKTYVAHSYYGTKATGLWLDTVNSNYDNGKVTWNTKPASKNIGKAEVHKGQWASYDVTAAVKSWNSGGANYGFKLHTNGNGKEYWKKLISSANSANKPYIEVTYTIPKGNTPSIKAYHNGDSTGYFDISWKKVEGAKGYKVWIYNGKEYQAISAGNVTSWSTKGKKIWPTSAEIASKRYKLHVDGKDGAELALDPSPVYKNSGGSYATSKNYWIGVSAIFDQGEGAMSAPAKPVIPNVGKAQAPSTKGYNNGNATGYFDLSWKAVSGATGYKVQVFNGKGFETLDLGNQTSWTTKGKKIWPTSAEIKAGKYALHLKDGNGAELPINPGPTYKNAGGDGAKKNYSFKIIAYNKDGEAIASPAANPTLPDIAKPKNLTGYLYTNTKSSQTGYVNLIWEKVQNAKGYKVNIYNGKEYQSYDVGDVDHWTTQNKNIWPTPEEIKAGSYKLHTDGKGRELALDPSPVYNNANGNYKGKKNYSFTLSAYNANGETIPTAPFNPTFHEGAEFLGTEEYWSIIDIPSGQLNGATGNVIVNEEDLSIDGRGPGLGLSRTYNSLDTSDHLFGQGWYADAETSVISTDGGAMYIDEDATTHRFTKKADGTYQPPTGVYLELTETADQFILKTKDQTNAYFNKKGGKLQKVVDGHNNATVYTYNDKNQLTAITDASGRKLTFTYDENGHVTSITGPKNKKVTYSYESDLLKKVTDTDGTVTSFDYDAEGRLVKQYSANSTEAKPVFTEYQYSGHRLEKAINAKKETYVYSYDADKKTLLMTQPNGRKVQYGYNEAGNPIQVIDDAEGLKITTNTKYEGNNVVEDVDPNDVGTGKATESYQYDKDGNVTSVKDAYGTETYEYNKNNDVTKMKDTEGNVTDIAYDGLDAVSETDQSGKSSSAAVYDKYGNQIQSSKDLSASTNILKDGSFEAQKSGWNLTASKDSGKISVIADKSGVLSGSKALEVLSQSTSAGTDHGYSSATQTVELEPNTTYTLSGKIKTDLAKSRAYFNIDLRDKDQKRIQWIHNEYSALAGKNDWTKRQITFTTPANAGKAVVYMEVDHRDKDGKGKAWFGEVQLEKGEVSSSYNPVQNSSFTAATENWSVSGASVDSEEGFNDDVSLKAARTSASQAGSVTKQTVVLGQNANDKPVYLTLTGMSKASSVKFTDEKDYSLQANVTYADGSTGVYNAKFPSGTQEWNRAAVVIPKTKPINKVDISILFQKSATGTVWFDDIRLIEGSLLTKSTYDSNGNYVTKEEDELGFSTSTDYDETGKKTAETDAKGEKTTYTYDQADQLTNMTLSNGTSILHSYDKEGNEVSKTIRAGADQTYKYEYDVMGKLVKTTDPLGNVLASEYDANSNLTKTISPNGNEVSLSYDGTDRVKSKSYNGTEKYNFTYDKNGNETSVVNKEQNTTKKRTFDNKNRLTELTDRGGSQTWTYPSDSDKLKTFSWSHGDQKGTNQFTYNKLDQMIEMKDSTSSYSFDYDENGNVQTFITGNGGGTSFSYDERNLVSSLHIGDKNGGSILTESYEYDANGNRTTINSSASGKVQYEYGKLNQLVKETHEDGTVIEYTYDGFGNRKTVTTVKDGSSKTVNASFNIMNQLTKVNDESISYDKNGNRTSDGKFTYTWDAEDNLTAVTKKGEDKPFATYKYDEKGNRIQKTVNGNVTNYFYDGDSLNVLYETDADNKVTKSYTYGDSGQLLSYTENGKKYFYHYNAHGDVIAISDSSGKTLAKYQYDAWGNPTKTEASDEVKDNRYRYAGYQYDEETGLYYLMARYYEPRNGVFLSLDPDPGSDGDSLDQNGYAYGNNNPVMNVDPDGHWVWLVVNAGFAAYDGYKAYKSGKGWKGAAWAAASNFGPGKIFKGAKRVYRFAKSGKNFNWKHIKKDHGPKSKARMPNGQPKSKFRSAKTLRRTTKATARTRPAYVQKDGRTVHFKKFKKPIGRKTNGRHTYTVKVVKSGRYVVTSYPY</sequence>
<evidence type="ECO:0000250" key="1"/>
<evidence type="ECO:0000255" key="2"/>
<evidence type="ECO:0000256" key="3">
    <source>
        <dbReference type="SAM" id="MobiDB-lite"/>
    </source>
</evidence>
<evidence type="ECO:0000269" key="4">
    <source>
    </source>
</evidence>
<evidence type="ECO:0000305" key="5"/>
<keyword id="KW-0134">Cell wall</keyword>
<keyword id="KW-0255">Endonuclease</keyword>
<keyword id="KW-0378">Hydrolase</keyword>
<keyword id="KW-0540">Nuclease</keyword>
<keyword id="KW-0677">Repeat</keyword>
<keyword id="KW-0964">Secreted</keyword>
<keyword id="KW-0732">Signal</keyword>
<keyword id="KW-0800">Toxin</keyword>
<keyword id="KW-0843">Virulence</keyword>
<feature type="signal peptide" evidence="2">
    <location>
        <begin position="1"/>
        <end position="32"/>
    </location>
</feature>
<feature type="chain" id="PRO_0000423976" description="tRNA3(Ser)-specific nuclease WapA">
    <location>
        <begin position="33"/>
        <end position="2335"/>
    </location>
</feature>
<feature type="repeat" description="YD 1">
    <location>
        <begin position="1032"/>
        <end position="1065"/>
    </location>
</feature>
<feature type="repeat" description="YD 2">
    <location>
        <begin position="1076"/>
        <end position="1103"/>
    </location>
</feature>
<feature type="repeat" description="YD 3">
    <location>
        <begin position="1678"/>
        <end position="1716"/>
    </location>
</feature>
<feature type="repeat" description="YD 4">
    <location>
        <begin position="1898"/>
        <end position="1935"/>
    </location>
</feature>
<feature type="repeat" description="YD 5">
    <location>
        <begin position="2082"/>
        <end position="2113"/>
    </location>
</feature>
<feature type="region of interest" description="Disordered" evidence="3">
    <location>
        <begin position="36"/>
        <end position="81"/>
    </location>
</feature>
<feature type="region of interest" description="Disordered" evidence="3">
    <location>
        <begin position="2251"/>
        <end position="2285"/>
    </location>
</feature>
<feature type="compositionally biased region" description="Basic and acidic residues" evidence="3">
    <location>
        <begin position="67"/>
        <end position="81"/>
    </location>
</feature>
<feature type="compositionally biased region" description="Basic residues" evidence="3">
    <location>
        <begin position="2251"/>
        <end position="2260"/>
    </location>
</feature>
<feature type="compositionally biased region" description="Basic residues" evidence="3">
    <location>
        <begin position="2269"/>
        <end position="2281"/>
    </location>
</feature>